<accession>P86518</accession>
<feature type="chain" id="PRO_0000394407" description="Defensin Ec-AMP-D1">
    <location>
        <begin position="1"/>
        <end position="47"/>
    </location>
</feature>
<feature type="disulfide bond" evidence="1">
    <location>
        <begin position="3"/>
        <end position="47"/>
    </location>
</feature>
<feature type="disulfide bond" evidence="1">
    <location>
        <begin position="14"/>
        <end position="34"/>
    </location>
</feature>
<feature type="disulfide bond" evidence="1">
    <location>
        <begin position="20"/>
        <end position="41"/>
    </location>
</feature>
<feature type="disulfide bond" evidence="1">
    <location>
        <begin position="24"/>
        <end position="43"/>
    </location>
</feature>
<organism>
    <name type="scientific">Echinochloa crus-galli</name>
    <name type="common">Barnyard grass</name>
    <name type="synonym">Panicum crus-galli</name>
    <dbReference type="NCBI Taxonomy" id="90397"/>
    <lineage>
        <taxon>Eukaryota</taxon>
        <taxon>Viridiplantae</taxon>
        <taxon>Streptophyta</taxon>
        <taxon>Embryophyta</taxon>
        <taxon>Tracheophyta</taxon>
        <taxon>Spermatophyta</taxon>
        <taxon>Magnoliopsida</taxon>
        <taxon>Liliopsida</taxon>
        <taxon>Poales</taxon>
        <taxon>Poaceae</taxon>
        <taxon>PACMAD clade</taxon>
        <taxon>Panicoideae</taxon>
        <taxon>Panicodae</taxon>
        <taxon>Paniceae</taxon>
        <taxon>Boivinellinae</taxon>
        <taxon>Echinochloa</taxon>
    </lineage>
</organism>
<sequence length="47" mass="5108">RECQSQSHRYKGACVHDTNCASVCQTEGFSGGKCVGFRGRCFCTKAC</sequence>
<reference evidence="5" key="1">
    <citation type="journal article" date="2008" name="Biochimie">
        <title>Seed defensins of barnyard grass Echinochloa crusgalli (L.) Beauv.</title>
        <authorList>
            <person name="Odintsova T.I."/>
            <person name="Rogozhin E.A."/>
            <person name="Baranov Y."/>
            <person name="Musolyamov A.K."/>
            <person name="Yalpani N."/>
            <person name="Egorov T.A."/>
            <person name="Grishin E.V."/>
        </authorList>
    </citation>
    <scope>PROTEIN SEQUENCE</scope>
    <scope>FUNCTION</scope>
    <scope>MASS SPECTROMETRY</scope>
    <source>
        <tissue evidence="3">Seed</tissue>
    </source>
</reference>
<name>DEF1_ECHCG</name>
<dbReference type="SMR" id="P86518"/>
<dbReference type="GO" id="GO:0050832">
    <property type="term" value="P:defense response to fungus"/>
    <property type="evidence" value="ECO:0007669"/>
    <property type="project" value="UniProtKB-KW"/>
</dbReference>
<dbReference type="GO" id="GO:0031640">
    <property type="term" value="P:killing of cells of another organism"/>
    <property type="evidence" value="ECO:0007669"/>
    <property type="project" value="UniProtKB-KW"/>
</dbReference>
<dbReference type="CDD" id="cd00107">
    <property type="entry name" value="Knot1"/>
    <property type="match status" value="1"/>
</dbReference>
<dbReference type="Gene3D" id="3.30.30.10">
    <property type="entry name" value="Knottin, scorpion toxin-like"/>
    <property type="match status" value="1"/>
</dbReference>
<dbReference type="InterPro" id="IPR008176">
    <property type="entry name" value="Defensin_plant"/>
</dbReference>
<dbReference type="InterPro" id="IPR003614">
    <property type="entry name" value="Scorpion_toxin-like"/>
</dbReference>
<dbReference type="InterPro" id="IPR036574">
    <property type="entry name" value="Scorpion_toxin-like_sf"/>
</dbReference>
<dbReference type="Pfam" id="PF00304">
    <property type="entry name" value="Gamma-thionin"/>
    <property type="match status" value="1"/>
</dbReference>
<dbReference type="PRINTS" id="PR00288">
    <property type="entry name" value="PUROTHIONIN"/>
</dbReference>
<dbReference type="SMART" id="SM00505">
    <property type="entry name" value="Knot1"/>
    <property type="match status" value="1"/>
</dbReference>
<dbReference type="SUPFAM" id="SSF57095">
    <property type="entry name" value="Scorpion toxin-like"/>
    <property type="match status" value="1"/>
</dbReference>
<dbReference type="PROSITE" id="PS00940">
    <property type="entry name" value="GAMMA_THIONIN"/>
    <property type="match status" value="1"/>
</dbReference>
<keyword id="KW-0929">Antimicrobial</keyword>
<keyword id="KW-0211">Defensin</keyword>
<keyword id="KW-0903">Direct protein sequencing</keyword>
<keyword id="KW-1015">Disulfide bond</keyword>
<keyword id="KW-0295">Fungicide</keyword>
<keyword id="KW-0611">Plant defense</keyword>
<evidence type="ECO:0000250" key="1">
    <source>
        <dbReference type="UniProtKB" id="Q8GTM0"/>
    </source>
</evidence>
<evidence type="ECO:0000255" key="2"/>
<evidence type="ECO:0000269" key="3">
    <source>
    </source>
</evidence>
<evidence type="ECO:0000303" key="4">
    <source>
    </source>
</evidence>
<evidence type="ECO:0000305" key="5"/>
<comment type="function">
    <text evidence="3">Has antifungal activity. Inhibits spore germination in F.graminearum (IC(50)=15 ug/ml), F.oxysporum (IC(50)=102 ug/ml), F.verticillioides (IC(50)=8.5 ug/ml) and D.maydis (IC(50)=12.5 ug/ml), but not in C.graminicola, B.cinerea and H.sativum at concentrations below 30 ug/ml. Inhibits hyphal development in P.infestans (IC(50)=25.5 ug/ml), but not release of zoospores. At concentrations above 100 ug/ml, induces morphological changes such as lysis of hyphae and sporangia in P.infestans.</text>
</comment>
<comment type="mass spectrometry" mass="5098.0" method="MALDI" evidence="3"/>
<comment type="similarity">
    <text evidence="2">Belongs to the DEFL family.</text>
</comment>
<protein>
    <recommendedName>
        <fullName evidence="4">Defensin Ec-AMP-D1</fullName>
    </recommendedName>
</protein>
<proteinExistence type="evidence at protein level"/>